<reference key="1">
    <citation type="journal article" date="2007" name="Mol. Biol. Evol.">
        <title>Chloroplast genome (cpDNA) of Cycas taitungensis and 56 cp protein-coding genes of Gnetum parvifolium: insights into cpDNA evolution and phylogeny of extant seed plants.</title>
        <authorList>
            <person name="Wu C.-S."/>
            <person name="Wang Y.-N."/>
            <person name="Liu S.-M."/>
            <person name="Chaw S.-M."/>
        </authorList>
    </citation>
    <scope>NUCLEOTIDE SEQUENCE [LARGE SCALE GENOMIC DNA]</scope>
</reference>
<protein>
    <recommendedName>
        <fullName evidence="1">ATP synthase subunit b, chloroplastic</fullName>
    </recommendedName>
    <alternativeName>
        <fullName evidence="1">ATP synthase F(0) sector subunit b</fullName>
    </alternativeName>
    <alternativeName>
        <fullName evidence="1">ATPase subunit I</fullName>
    </alternativeName>
</protein>
<name>ATPF_CYCTA</name>
<feature type="chain" id="PRO_0000368927" description="ATP synthase subunit b, chloroplastic">
    <location>
        <begin position="1"/>
        <end position="184"/>
    </location>
</feature>
<feature type="transmembrane region" description="Helical" evidence="1">
    <location>
        <begin position="31"/>
        <end position="53"/>
    </location>
</feature>
<keyword id="KW-0066">ATP synthesis</keyword>
<keyword id="KW-0138">CF(0)</keyword>
<keyword id="KW-0150">Chloroplast</keyword>
<keyword id="KW-0375">Hydrogen ion transport</keyword>
<keyword id="KW-0406">Ion transport</keyword>
<keyword id="KW-0472">Membrane</keyword>
<keyword id="KW-0934">Plastid</keyword>
<keyword id="KW-0793">Thylakoid</keyword>
<keyword id="KW-0812">Transmembrane</keyword>
<keyword id="KW-1133">Transmembrane helix</keyword>
<keyword id="KW-0813">Transport</keyword>
<organism>
    <name type="scientific">Cycas taitungensis</name>
    <name type="common">Prince sago</name>
    <name type="synonym">Cycas taiwaniana</name>
    <dbReference type="NCBI Taxonomy" id="54799"/>
    <lineage>
        <taxon>Eukaryota</taxon>
        <taxon>Viridiplantae</taxon>
        <taxon>Streptophyta</taxon>
        <taxon>Embryophyta</taxon>
        <taxon>Tracheophyta</taxon>
        <taxon>Spermatophyta</taxon>
        <taxon>Cycadidae</taxon>
        <taxon>Cycadales</taxon>
        <taxon>Cycadaceae</taxon>
        <taxon>Cycas</taxon>
    </lineage>
</organism>
<gene>
    <name evidence="1" type="primary">atpF</name>
</gene>
<dbReference type="EMBL" id="AP009339">
    <property type="protein sequence ID" value="BAF64918.1"/>
    <property type="molecule type" value="Genomic_DNA"/>
</dbReference>
<dbReference type="RefSeq" id="YP_001312177.1">
    <property type="nucleotide sequence ID" value="NC_009618.1"/>
</dbReference>
<dbReference type="SMR" id="A6H5F2"/>
<dbReference type="GeneID" id="5309582"/>
<dbReference type="GO" id="GO:0009535">
    <property type="term" value="C:chloroplast thylakoid membrane"/>
    <property type="evidence" value="ECO:0007669"/>
    <property type="project" value="UniProtKB-SubCell"/>
</dbReference>
<dbReference type="GO" id="GO:0045259">
    <property type="term" value="C:proton-transporting ATP synthase complex"/>
    <property type="evidence" value="ECO:0007669"/>
    <property type="project" value="UniProtKB-KW"/>
</dbReference>
<dbReference type="GO" id="GO:0046933">
    <property type="term" value="F:proton-transporting ATP synthase activity, rotational mechanism"/>
    <property type="evidence" value="ECO:0007669"/>
    <property type="project" value="UniProtKB-UniRule"/>
</dbReference>
<dbReference type="CDD" id="cd06503">
    <property type="entry name" value="ATP-synt_Fo_b"/>
    <property type="match status" value="1"/>
</dbReference>
<dbReference type="HAMAP" id="MF_01398">
    <property type="entry name" value="ATP_synth_b_bprime"/>
    <property type="match status" value="1"/>
</dbReference>
<dbReference type="InterPro" id="IPR002146">
    <property type="entry name" value="ATP_synth_b/b'su_bac/chlpt"/>
</dbReference>
<dbReference type="NCBIfam" id="NF005606">
    <property type="entry name" value="PRK07352.1"/>
    <property type="match status" value="1"/>
</dbReference>
<dbReference type="PANTHER" id="PTHR34264">
    <property type="entry name" value="ATP SYNTHASE SUBUNIT B, CHLOROPLASTIC"/>
    <property type="match status" value="1"/>
</dbReference>
<dbReference type="PANTHER" id="PTHR34264:SF3">
    <property type="entry name" value="ATP SYNTHASE SUBUNIT B, CHLOROPLASTIC"/>
    <property type="match status" value="1"/>
</dbReference>
<dbReference type="Pfam" id="PF00430">
    <property type="entry name" value="ATP-synt_B"/>
    <property type="match status" value="1"/>
</dbReference>
<comment type="function">
    <text evidence="1">F(1)F(0) ATP synthase produces ATP from ADP in the presence of a proton or sodium gradient. F-type ATPases consist of two structural domains, F(1) containing the extramembraneous catalytic core and F(0) containing the membrane proton channel, linked together by a central stalk and a peripheral stalk. During catalysis, ATP synthesis in the catalytic domain of F(1) is coupled via a rotary mechanism of the central stalk subunits to proton translocation.</text>
</comment>
<comment type="function">
    <text evidence="1">Component of the F(0) channel, it forms part of the peripheral stalk, linking F(1) to F(0).</text>
</comment>
<comment type="subunit">
    <text evidence="1">F-type ATPases have 2 components, F(1) - the catalytic core - and F(0) - the membrane proton channel. F(1) has five subunits: alpha(3), beta(3), gamma(1), delta(1), epsilon(1). F(0) has four main subunits: a(1), b(1), b'(1) and c(10-14). The alpha and beta chains form an alternating ring which encloses part of the gamma chain. F(1) is attached to F(0) by a central stalk formed by the gamma and epsilon chains, while a peripheral stalk is formed by the delta, b and b' chains.</text>
</comment>
<comment type="subcellular location">
    <subcellularLocation>
        <location evidence="1">Plastid</location>
        <location evidence="1">Chloroplast thylakoid membrane</location>
        <topology evidence="1">Single-pass membrane protein</topology>
    </subcellularLocation>
</comment>
<comment type="miscellaneous">
    <text>In plastids the F-type ATPase is also known as CF(1)CF(0).</text>
</comment>
<comment type="similarity">
    <text evidence="1">Belongs to the ATPase B chain family.</text>
</comment>
<evidence type="ECO:0000255" key="1">
    <source>
        <dbReference type="HAMAP-Rule" id="MF_01398"/>
    </source>
</evidence>
<sequence length="184" mass="20973">MINGTDFSFSLGYWPPAGGFGLNTNILGTNLINLSVVLGVLIYFGKGVLSNLLDDRKQKILSTIRDSEELYKGATDQLEKARARLREVEMRADEIQVNGYSQIEREKEDLINAAHENLERLEDSKNETVNFEQQRAIDQVRQQISRQALRRALGTLNSRLNNELHLRTIDHNISMLRAMKNTTD</sequence>
<accession>A6H5F2</accession>
<geneLocation type="chloroplast"/>
<proteinExistence type="inferred from homology"/>